<dbReference type="EMBL" id="BX640422">
    <property type="protein sequence ID" value="CAE43879.1"/>
    <property type="molecule type" value="Genomic_DNA"/>
</dbReference>
<dbReference type="RefSeq" id="NP_882131.1">
    <property type="nucleotide sequence ID" value="NC_002929.2"/>
</dbReference>
<dbReference type="RefSeq" id="WP_003806912.1">
    <property type="nucleotide sequence ID" value="NZ_CP039022.1"/>
</dbReference>
<dbReference type="SMR" id="Q7VTC5"/>
<dbReference type="STRING" id="257313.BP3621"/>
<dbReference type="PaxDb" id="257313-BP3621"/>
<dbReference type="GeneID" id="94357764"/>
<dbReference type="KEGG" id="bpe:BP3621"/>
<dbReference type="PATRIC" id="fig|257313.5.peg.3919"/>
<dbReference type="eggNOG" id="COG0255">
    <property type="taxonomic scope" value="Bacteria"/>
</dbReference>
<dbReference type="HOGENOM" id="CLU_158491_1_1_4"/>
<dbReference type="PRO" id="PR:Q7VTC5"/>
<dbReference type="Proteomes" id="UP000002676">
    <property type="component" value="Chromosome"/>
</dbReference>
<dbReference type="GO" id="GO:0022625">
    <property type="term" value="C:cytosolic large ribosomal subunit"/>
    <property type="evidence" value="ECO:0007669"/>
    <property type="project" value="TreeGrafter"/>
</dbReference>
<dbReference type="GO" id="GO:0003735">
    <property type="term" value="F:structural constituent of ribosome"/>
    <property type="evidence" value="ECO:0007669"/>
    <property type="project" value="InterPro"/>
</dbReference>
<dbReference type="GO" id="GO:0006412">
    <property type="term" value="P:translation"/>
    <property type="evidence" value="ECO:0007669"/>
    <property type="project" value="UniProtKB-UniRule"/>
</dbReference>
<dbReference type="CDD" id="cd00427">
    <property type="entry name" value="Ribosomal_L29_HIP"/>
    <property type="match status" value="1"/>
</dbReference>
<dbReference type="FunFam" id="1.10.287.310:FF:000001">
    <property type="entry name" value="50S ribosomal protein L29"/>
    <property type="match status" value="1"/>
</dbReference>
<dbReference type="Gene3D" id="1.10.287.310">
    <property type="match status" value="1"/>
</dbReference>
<dbReference type="HAMAP" id="MF_00374">
    <property type="entry name" value="Ribosomal_uL29"/>
    <property type="match status" value="1"/>
</dbReference>
<dbReference type="InterPro" id="IPR050063">
    <property type="entry name" value="Ribosomal_protein_uL29"/>
</dbReference>
<dbReference type="InterPro" id="IPR001854">
    <property type="entry name" value="Ribosomal_uL29"/>
</dbReference>
<dbReference type="InterPro" id="IPR018254">
    <property type="entry name" value="Ribosomal_uL29_CS"/>
</dbReference>
<dbReference type="InterPro" id="IPR036049">
    <property type="entry name" value="Ribosomal_uL29_sf"/>
</dbReference>
<dbReference type="NCBIfam" id="TIGR00012">
    <property type="entry name" value="L29"/>
    <property type="match status" value="1"/>
</dbReference>
<dbReference type="PANTHER" id="PTHR10916">
    <property type="entry name" value="60S RIBOSOMAL PROTEIN L35/50S RIBOSOMAL PROTEIN L29"/>
    <property type="match status" value="1"/>
</dbReference>
<dbReference type="PANTHER" id="PTHR10916:SF0">
    <property type="entry name" value="LARGE RIBOSOMAL SUBUNIT PROTEIN UL29C"/>
    <property type="match status" value="1"/>
</dbReference>
<dbReference type="Pfam" id="PF00831">
    <property type="entry name" value="Ribosomal_L29"/>
    <property type="match status" value="1"/>
</dbReference>
<dbReference type="SUPFAM" id="SSF46561">
    <property type="entry name" value="Ribosomal protein L29 (L29p)"/>
    <property type="match status" value="1"/>
</dbReference>
<dbReference type="PROSITE" id="PS00579">
    <property type="entry name" value="RIBOSOMAL_L29"/>
    <property type="match status" value="1"/>
</dbReference>
<organism>
    <name type="scientific">Bordetella pertussis (strain Tohama I / ATCC BAA-589 / NCTC 13251)</name>
    <dbReference type="NCBI Taxonomy" id="257313"/>
    <lineage>
        <taxon>Bacteria</taxon>
        <taxon>Pseudomonadati</taxon>
        <taxon>Pseudomonadota</taxon>
        <taxon>Betaproteobacteria</taxon>
        <taxon>Burkholderiales</taxon>
        <taxon>Alcaligenaceae</taxon>
        <taxon>Bordetella</taxon>
    </lineage>
</organism>
<proteinExistence type="inferred from homology"/>
<accession>Q7VTC5</accession>
<protein>
    <recommendedName>
        <fullName evidence="1">Large ribosomal subunit protein uL29</fullName>
    </recommendedName>
    <alternativeName>
        <fullName evidence="2">50S ribosomal protein L29</fullName>
    </alternativeName>
</protein>
<keyword id="KW-1185">Reference proteome</keyword>
<keyword id="KW-0687">Ribonucleoprotein</keyword>
<keyword id="KW-0689">Ribosomal protein</keyword>
<gene>
    <name evidence="1" type="primary">rpmC</name>
    <name type="ordered locus">BP3621</name>
</gene>
<feature type="chain" id="PRO_1000007425" description="Large ribosomal subunit protein uL29">
    <location>
        <begin position="1"/>
        <end position="63"/>
    </location>
</feature>
<reference key="1">
    <citation type="journal article" date="2003" name="Nat. Genet.">
        <title>Comparative analysis of the genome sequences of Bordetella pertussis, Bordetella parapertussis and Bordetella bronchiseptica.</title>
        <authorList>
            <person name="Parkhill J."/>
            <person name="Sebaihia M."/>
            <person name="Preston A."/>
            <person name="Murphy L.D."/>
            <person name="Thomson N.R."/>
            <person name="Harris D.E."/>
            <person name="Holden M.T.G."/>
            <person name="Churcher C.M."/>
            <person name="Bentley S.D."/>
            <person name="Mungall K.L."/>
            <person name="Cerdeno-Tarraga A.-M."/>
            <person name="Temple L."/>
            <person name="James K.D."/>
            <person name="Harris B."/>
            <person name="Quail M.A."/>
            <person name="Achtman M."/>
            <person name="Atkin R."/>
            <person name="Baker S."/>
            <person name="Basham D."/>
            <person name="Bason N."/>
            <person name="Cherevach I."/>
            <person name="Chillingworth T."/>
            <person name="Collins M."/>
            <person name="Cronin A."/>
            <person name="Davis P."/>
            <person name="Doggett J."/>
            <person name="Feltwell T."/>
            <person name="Goble A."/>
            <person name="Hamlin N."/>
            <person name="Hauser H."/>
            <person name="Holroyd S."/>
            <person name="Jagels K."/>
            <person name="Leather S."/>
            <person name="Moule S."/>
            <person name="Norberczak H."/>
            <person name="O'Neil S."/>
            <person name="Ormond D."/>
            <person name="Price C."/>
            <person name="Rabbinowitsch E."/>
            <person name="Rutter S."/>
            <person name="Sanders M."/>
            <person name="Saunders D."/>
            <person name="Seeger K."/>
            <person name="Sharp S."/>
            <person name="Simmonds M."/>
            <person name="Skelton J."/>
            <person name="Squares R."/>
            <person name="Squares S."/>
            <person name="Stevens K."/>
            <person name="Unwin L."/>
            <person name="Whitehead S."/>
            <person name="Barrell B.G."/>
            <person name="Maskell D.J."/>
        </authorList>
    </citation>
    <scope>NUCLEOTIDE SEQUENCE [LARGE SCALE GENOMIC DNA]</scope>
    <source>
        <strain>Tohama I / ATCC BAA-589 / NCTC 13251</strain>
    </source>
</reference>
<comment type="similarity">
    <text evidence="1">Belongs to the universal ribosomal protein uL29 family.</text>
</comment>
<sequence length="63" mass="7098">MKASELRSKDAAELGKELESLLKAQFGLRMQKATQQLANTSQLRNVRRDIARVRTLLTEKAGK</sequence>
<name>RL29_BORPE</name>
<evidence type="ECO:0000255" key="1">
    <source>
        <dbReference type="HAMAP-Rule" id="MF_00374"/>
    </source>
</evidence>
<evidence type="ECO:0000305" key="2"/>